<evidence type="ECO:0000255" key="1">
    <source>
        <dbReference type="HAMAP-Rule" id="MF_01327"/>
    </source>
</evidence>
<evidence type="ECO:0000305" key="2"/>
<dbReference type="EC" id="2.5.1.3" evidence="1"/>
<dbReference type="EMBL" id="BX548174">
    <property type="protein sequence ID" value="CAE19733.1"/>
    <property type="molecule type" value="Genomic_DNA"/>
</dbReference>
<dbReference type="RefSeq" id="WP_011132908.1">
    <property type="nucleotide sequence ID" value="NC_005072.1"/>
</dbReference>
<dbReference type="SMR" id="Q7V0I3"/>
<dbReference type="STRING" id="59919.PMM1274"/>
<dbReference type="KEGG" id="pmm:PMM1274"/>
<dbReference type="eggNOG" id="COG0352">
    <property type="taxonomic scope" value="Bacteria"/>
</dbReference>
<dbReference type="HOGENOM" id="CLU_064900_0_0_3"/>
<dbReference type="OrthoDB" id="9812206at2"/>
<dbReference type="UniPathway" id="UPA00060">
    <property type="reaction ID" value="UER00141"/>
</dbReference>
<dbReference type="Proteomes" id="UP000001026">
    <property type="component" value="Chromosome"/>
</dbReference>
<dbReference type="GO" id="GO:0005737">
    <property type="term" value="C:cytoplasm"/>
    <property type="evidence" value="ECO:0007669"/>
    <property type="project" value="TreeGrafter"/>
</dbReference>
<dbReference type="GO" id="GO:0000287">
    <property type="term" value="F:magnesium ion binding"/>
    <property type="evidence" value="ECO:0007669"/>
    <property type="project" value="UniProtKB-UniRule"/>
</dbReference>
<dbReference type="GO" id="GO:0004789">
    <property type="term" value="F:thiamine-phosphate diphosphorylase activity"/>
    <property type="evidence" value="ECO:0007669"/>
    <property type="project" value="UniProtKB-UniRule"/>
</dbReference>
<dbReference type="GO" id="GO:0009228">
    <property type="term" value="P:thiamine biosynthetic process"/>
    <property type="evidence" value="ECO:0007669"/>
    <property type="project" value="UniProtKB-KW"/>
</dbReference>
<dbReference type="GO" id="GO:0009229">
    <property type="term" value="P:thiamine diphosphate biosynthetic process"/>
    <property type="evidence" value="ECO:0007669"/>
    <property type="project" value="UniProtKB-UniRule"/>
</dbReference>
<dbReference type="CDD" id="cd00564">
    <property type="entry name" value="TMP_TenI"/>
    <property type="match status" value="1"/>
</dbReference>
<dbReference type="FunFam" id="3.20.20.70:FF:000096">
    <property type="entry name" value="Thiamine-phosphate synthase"/>
    <property type="match status" value="1"/>
</dbReference>
<dbReference type="Gene3D" id="3.20.20.70">
    <property type="entry name" value="Aldolase class I"/>
    <property type="match status" value="1"/>
</dbReference>
<dbReference type="HAMAP" id="MF_00097">
    <property type="entry name" value="TMP_synthase"/>
    <property type="match status" value="1"/>
</dbReference>
<dbReference type="HAMAP" id="MF_01327">
    <property type="entry name" value="TMP_synthase_cyanobact"/>
    <property type="match status" value="1"/>
</dbReference>
<dbReference type="InterPro" id="IPR013785">
    <property type="entry name" value="Aldolase_TIM"/>
</dbReference>
<dbReference type="InterPro" id="IPR036206">
    <property type="entry name" value="ThiamineP_synth_sf"/>
</dbReference>
<dbReference type="InterPro" id="IPR022998">
    <property type="entry name" value="ThiamineP_synth_TenI"/>
</dbReference>
<dbReference type="InterPro" id="IPR041397">
    <property type="entry name" value="ThiD2"/>
</dbReference>
<dbReference type="InterPro" id="IPR034291">
    <property type="entry name" value="TMP_synthase"/>
</dbReference>
<dbReference type="InterPro" id="IPR016229">
    <property type="entry name" value="TMP_synthase_cyanobac_bac"/>
</dbReference>
<dbReference type="NCBIfam" id="NF002727">
    <property type="entry name" value="PRK02615.1"/>
    <property type="match status" value="1"/>
</dbReference>
<dbReference type="NCBIfam" id="TIGR00693">
    <property type="entry name" value="thiE"/>
    <property type="match status" value="1"/>
</dbReference>
<dbReference type="PANTHER" id="PTHR20857:SF23">
    <property type="entry name" value="THIAMINE BIOSYNTHETIC BIFUNCTIONAL ENZYME"/>
    <property type="match status" value="1"/>
</dbReference>
<dbReference type="PANTHER" id="PTHR20857">
    <property type="entry name" value="THIAMINE-PHOSPHATE PYROPHOSPHORYLASE"/>
    <property type="match status" value="1"/>
</dbReference>
<dbReference type="Pfam" id="PF17792">
    <property type="entry name" value="ThiD2"/>
    <property type="match status" value="1"/>
</dbReference>
<dbReference type="Pfam" id="PF02581">
    <property type="entry name" value="TMP-TENI"/>
    <property type="match status" value="1"/>
</dbReference>
<dbReference type="PIRSF" id="PIRSF000512">
    <property type="entry name" value="TMP_PPase_Cyanobac_prd"/>
    <property type="match status" value="1"/>
</dbReference>
<dbReference type="SUPFAM" id="SSF51391">
    <property type="entry name" value="Thiamin phosphate synthase"/>
    <property type="match status" value="1"/>
</dbReference>
<protein>
    <recommendedName>
        <fullName evidence="1">Thiamine-phosphate synthase</fullName>
        <shortName evidence="1">TP synthase</shortName>
        <shortName evidence="1">TPS</shortName>
        <ecNumber evidence="1">2.5.1.3</ecNumber>
    </recommendedName>
    <alternativeName>
        <fullName evidence="1">Thiamine-phosphate pyrophosphorylase</fullName>
        <shortName evidence="1">TMP pyrophosphorylase</shortName>
        <shortName evidence="1">TMP-PPase</shortName>
    </alternativeName>
</protein>
<name>THIE_PROMP</name>
<reference key="1">
    <citation type="journal article" date="2003" name="Nature">
        <title>Genome divergence in two Prochlorococcus ecotypes reflects oceanic niche differentiation.</title>
        <authorList>
            <person name="Rocap G."/>
            <person name="Larimer F.W."/>
            <person name="Lamerdin J.E."/>
            <person name="Malfatti S."/>
            <person name="Chain P."/>
            <person name="Ahlgren N.A."/>
            <person name="Arellano A."/>
            <person name="Coleman M."/>
            <person name="Hauser L."/>
            <person name="Hess W.R."/>
            <person name="Johnson Z.I."/>
            <person name="Land M.L."/>
            <person name="Lindell D."/>
            <person name="Post A.F."/>
            <person name="Regala W."/>
            <person name="Shah M."/>
            <person name="Shaw S.L."/>
            <person name="Steglich C."/>
            <person name="Sullivan M.B."/>
            <person name="Ting C.S."/>
            <person name="Tolonen A."/>
            <person name="Webb E.A."/>
            <person name="Zinser E.R."/>
            <person name="Chisholm S.W."/>
        </authorList>
    </citation>
    <scope>NUCLEOTIDE SEQUENCE [LARGE SCALE GENOMIC DNA]</scope>
    <source>
        <strain>CCMP1986 / NIES-2087 / MED4</strain>
    </source>
</reference>
<keyword id="KW-0460">Magnesium</keyword>
<keyword id="KW-0479">Metal-binding</keyword>
<keyword id="KW-0784">Thiamine biosynthesis</keyword>
<keyword id="KW-0808">Transferase</keyword>
<proteinExistence type="inferred from homology"/>
<gene>
    <name evidence="1" type="primary">thiE</name>
    <name type="ordered locus">PMM1274</name>
</gene>
<comment type="function">
    <text evidence="1">Condenses 4-methyl-5-(beta-hydroxyethyl)thiazole monophosphate (THZ-P) and 2-methyl-4-amino-5-hydroxymethyl pyrimidine pyrophosphate (HMP-PP) to form thiamine monophosphate (TMP).</text>
</comment>
<comment type="catalytic activity">
    <reaction evidence="1">
        <text>2-[(2R,5Z)-2-carboxy-4-methylthiazol-5(2H)-ylidene]ethyl phosphate + 4-amino-2-methyl-5-(diphosphooxymethyl)pyrimidine + 2 H(+) = thiamine phosphate + CO2 + diphosphate</text>
        <dbReference type="Rhea" id="RHEA:47844"/>
        <dbReference type="ChEBI" id="CHEBI:15378"/>
        <dbReference type="ChEBI" id="CHEBI:16526"/>
        <dbReference type="ChEBI" id="CHEBI:33019"/>
        <dbReference type="ChEBI" id="CHEBI:37575"/>
        <dbReference type="ChEBI" id="CHEBI:57841"/>
        <dbReference type="ChEBI" id="CHEBI:62899"/>
        <dbReference type="EC" id="2.5.1.3"/>
    </reaction>
</comment>
<comment type="catalytic activity">
    <reaction evidence="1">
        <text>2-(2-carboxy-4-methylthiazol-5-yl)ethyl phosphate + 4-amino-2-methyl-5-(diphosphooxymethyl)pyrimidine + 2 H(+) = thiamine phosphate + CO2 + diphosphate</text>
        <dbReference type="Rhea" id="RHEA:47848"/>
        <dbReference type="ChEBI" id="CHEBI:15378"/>
        <dbReference type="ChEBI" id="CHEBI:16526"/>
        <dbReference type="ChEBI" id="CHEBI:33019"/>
        <dbReference type="ChEBI" id="CHEBI:37575"/>
        <dbReference type="ChEBI" id="CHEBI:57841"/>
        <dbReference type="ChEBI" id="CHEBI:62890"/>
        <dbReference type="EC" id="2.5.1.3"/>
    </reaction>
</comment>
<comment type="catalytic activity">
    <reaction evidence="1">
        <text>4-methyl-5-(2-phosphooxyethyl)-thiazole + 4-amino-2-methyl-5-(diphosphooxymethyl)pyrimidine + H(+) = thiamine phosphate + diphosphate</text>
        <dbReference type="Rhea" id="RHEA:22328"/>
        <dbReference type="ChEBI" id="CHEBI:15378"/>
        <dbReference type="ChEBI" id="CHEBI:33019"/>
        <dbReference type="ChEBI" id="CHEBI:37575"/>
        <dbReference type="ChEBI" id="CHEBI:57841"/>
        <dbReference type="ChEBI" id="CHEBI:58296"/>
        <dbReference type="EC" id="2.5.1.3"/>
    </reaction>
</comment>
<comment type="pathway">
    <text evidence="1">Cofactor biosynthesis; thiamine diphosphate biosynthesis; thiamine phosphate from 4-amino-2-methyl-5-diphosphomethylpyrimidine and 4-methyl-5-(2-phosphoethyl)-thiazole: step 1/1.</text>
</comment>
<comment type="similarity">
    <text evidence="1">Belongs to the thiamine-phosphate synthase family.</text>
</comment>
<comment type="caution">
    <text evidence="2">Asn-213 is present instead of the conserved Asp which is expected to be a metal binding residue.</text>
</comment>
<feature type="chain" id="PRO_0000157082" description="Thiamine-phosphate synthase">
    <location>
        <begin position="1"/>
        <end position="351"/>
    </location>
</feature>
<feature type="region of interest" description="Unknown">
    <location>
        <begin position="1"/>
        <end position="128"/>
    </location>
</feature>
<feature type="region of interest" description="Thiamine-phosphate synthase">
    <location>
        <begin position="129"/>
        <end position="351"/>
    </location>
</feature>
<feature type="binding site" evidence="1">
    <location>
        <begin position="180"/>
        <end position="184"/>
    </location>
    <ligand>
        <name>4-amino-2-methyl-5-(diphosphooxymethyl)pyrimidine</name>
        <dbReference type="ChEBI" id="CHEBI:57841"/>
    </ligand>
</feature>
<feature type="binding site" evidence="1">
    <location>
        <position position="212"/>
    </location>
    <ligand>
        <name>4-amino-2-methyl-5-(diphosphooxymethyl)pyrimidine</name>
        <dbReference type="ChEBI" id="CHEBI:57841"/>
    </ligand>
</feature>
<feature type="binding site" evidence="1">
    <location>
        <position position="213"/>
    </location>
    <ligand>
        <name>Mg(2+)</name>
        <dbReference type="ChEBI" id="CHEBI:18420"/>
    </ligand>
</feature>
<feature type="binding site" evidence="1">
    <location>
        <position position="232"/>
    </location>
    <ligand>
        <name>Mg(2+)</name>
        <dbReference type="ChEBI" id="CHEBI:18420"/>
    </ligand>
</feature>
<feature type="binding site" evidence="1">
    <location>
        <position position="251"/>
    </location>
    <ligand>
        <name>4-amino-2-methyl-5-(diphosphooxymethyl)pyrimidine</name>
        <dbReference type="ChEBI" id="CHEBI:57841"/>
    </ligand>
</feature>
<feature type="binding site" evidence="1">
    <location>
        <begin position="277"/>
        <end position="279"/>
    </location>
    <ligand>
        <name>2-[(2R,5Z)-2-carboxy-4-methylthiazol-5(2H)-ylidene]ethyl phosphate</name>
        <dbReference type="ChEBI" id="CHEBI:62899"/>
    </ligand>
</feature>
<feature type="binding site" evidence="1">
    <location>
        <position position="280"/>
    </location>
    <ligand>
        <name>4-amino-2-methyl-5-(diphosphooxymethyl)pyrimidine</name>
        <dbReference type="ChEBI" id="CHEBI:57841"/>
    </ligand>
</feature>
<feature type="binding site" evidence="1">
    <location>
        <position position="307"/>
    </location>
    <ligand>
        <name>2-[(2R,5Z)-2-carboxy-4-methylthiazol-5(2H)-ylidene]ethyl phosphate</name>
        <dbReference type="ChEBI" id="CHEBI:62899"/>
    </ligand>
</feature>
<feature type="binding site" evidence="1">
    <location>
        <begin position="327"/>
        <end position="328"/>
    </location>
    <ligand>
        <name>2-[(2R,5Z)-2-carboxy-4-methylthiazol-5(2H)-ylidene]ethyl phosphate</name>
        <dbReference type="ChEBI" id="CHEBI:62899"/>
    </ligand>
</feature>
<sequence length="351" mass="39600">MKNPNIIQPEDLRISQIIDANLDRAREGLRVLEDWARFGLGNEDFVIRIKNFRQILGKNHLEIYKLSRNHIEDQCKGLSHVEQINRNSSSKIISSNSARVQEALRVIEEFSRIHNSKLSKIASEIRYEIYTLEIEILNFNTRKRAQSIISKNNLYSITDPRENLLEIIEKILLGGVKIIQHRFKEGNDKDHLKEAIEINKLCKKYNSLFIVNNRLDIALASKADGVHLGQDDLDIKTVRKLLGASKIIGVSANNSTDINKAVKDGCDYIGVGPVFPTLTKKNKEPLGEEKIKALTKELNIPCFAIGGINKLNISSLKNHGISKVAIVSGLLNSEDPKDEAMIIIKELSHEN</sequence>
<organism>
    <name type="scientific">Prochlorococcus marinus subsp. pastoris (strain CCMP1986 / NIES-2087 / MED4)</name>
    <dbReference type="NCBI Taxonomy" id="59919"/>
    <lineage>
        <taxon>Bacteria</taxon>
        <taxon>Bacillati</taxon>
        <taxon>Cyanobacteriota</taxon>
        <taxon>Cyanophyceae</taxon>
        <taxon>Synechococcales</taxon>
        <taxon>Prochlorococcaceae</taxon>
        <taxon>Prochlorococcus</taxon>
    </lineage>
</organism>
<accession>Q7V0I3</accession>